<dbReference type="EMBL" id="AF454951">
    <property type="protein sequence ID" value="AAL59346.1"/>
    <property type="molecule type" value="Genomic_DNA"/>
</dbReference>
<dbReference type="EMBL" id="AE017224">
    <property type="status" value="NOT_ANNOTATED_CDS"/>
    <property type="molecule type" value="Genomic_DNA"/>
</dbReference>
<dbReference type="SMR" id="Q8VQK3"/>
<dbReference type="Proteomes" id="UP000000540">
    <property type="component" value="Chromosome II"/>
</dbReference>
<dbReference type="GO" id="GO:0043190">
    <property type="term" value="C:ATP-binding cassette (ABC) transporter complex"/>
    <property type="evidence" value="ECO:0007669"/>
    <property type="project" value="InterPro"/>
</dbReference>
<dbReference type="GO" id="GO:0030288">
    <property type="term" value="C:outer membrane-bounded periplasmic space"/>
    <property type="evidence" value="ECO:0007669"/>
    <property type="project" value="UniProtKB-ARBA"/>
</dbReference>
<dbReference type="GO" id="GO:1904680">
    <property type="term" value="F:peptide transmembrane transporter activity"/>
    <property type="evidence" value="ECO:0007669"/>
    <property type="project" value="TreeGrafter"/>
</dbReference>
<dbReference type="GO" id="GO:0015833">
    <property type="term" value="P:peptide transport"/>
    <property type="evidence" value="ECO:0007669"/>
    <property type="project" value="TreeGrafter"/>
</dbReference>
<dbReference type="CDD" id="cd08502">
    <property type="entry name" value="PBP2_NikA_DppA_OppA_like_16"/>
    <property type="match status" value="1"/>
</dbReference>
<dbReference type="Gene3D" id="3.10.105.10">
    <property type="entry name" value="Dipeptide-binding Protein, Domain 3"/>
    <property type="match status" value="1"/>
</dbReference>
<dbReference type="Gene3D" id="3.40.190.10">
    <property type="entry name" value="Periplasmic binding protein-like II"/>
    <property type="match status" value="1"/>
</dbReference>
<dbReference type="InterPro" id="IPR030678">
    <property type="entry name" value="Peptide/Ni-bd"/>
</dbReference>
<dbReference type="InterPro" id="IPR039424">
    <property type="entry name" value="SBP_5"/>
</dbReference>
<dbReference type="InterPro" id="IPR023765">
    <property type="entry name" value="SBP_5_CS"/>
</dbReference>
<dbReference type="InterPro" id="IPR000914">
    <property type="entry name" value="SBP_5_dom"/>
</dbReference>
<dbReference type="PANTHER" id="PTHR30290:SF38">
    <property type="entry name" value="D,D-DIPEPTIDE-BINDING PERIPLASMIC PROTEIN DDPA-RELATED"/>
    <property type="match status" value="1"/>
</dbReference>
<dbReference type="PANTHER" id="PTHR30290">
    <property type="entry name" value="PERIPLASMIC BINDING COMPONENT OF ABC TRANSPORTER"/>
    <property type="match status" value="1"/>
</dbReference>
<dbReference type="Pfam" id="PF00496">
    <property type="entry name" value="SBP_bac_5"/>
    <property type="match status" value="1"/>
</dbReference>
<dbReference type="PIRSF" id="PIRSF002741">
    <property type="entry name" value="MppA"/>
    <property type="match status" value="1"/>
</dbReference>
<dbReference type="SUPFAM" id="SSF53850">
    <property type="entry name" value="Periplasmic binding protein-like II"/>
    <property type="match status" value="1"/>
</dbReference>
<dbReference type="PROSITE" id="PS01040">
    <property type="entry name" value="SBP_BACTERIAL_5"/>
    <property type="match status" value="1"/>
</dbReference>
<feature type="signal peptide" evidence="2">
    <location>
        <begin position="1"/>
        <end position="23"/>
    </location>
</feature>
<feature type="chain" id="PRO_0000290143" description="Putative peptide-binding periplasmic protein BruAb2_1030">
    <location>
        <begin position="24"/>
        <end position="514"/>
    </location>
</feature>
<feature type="sequence conflict" description="In Ref. 1; AAL59346." evidence="3" ref="1">
    <original>A</original>
    <variation>D</variation>
    <location>
        <position position="288"/>
    </location>
</feature>
<comment type="function">
    <text evidence="1">Probably part of an ABC transporter complex that could be involved in peptide import.</text>
</comment>
<comment type="subunit">
    <text evidence="3">The complex is composed of two ATP-binding proteins (BruAb2_1033 and BruAb2_1034), two transmembrane proteins (BruAb2_1031 and BruAb2_1032) and a solute-binding protein (BruAb2_1030).</text>
</comment>
<comment type="subcellular location">
    <subcellularLocation>
        <location evidence="3">Periplasm</location>
    </subcellularLocation>
</comment>
<comment type="similarity">
    <text evidence="3">Belongs to the bacterial solute-binding protein 5 family.</text>
</comment>
<sequence>MTIRTLFNAILLSTTLLAAPSLAETPKEGGTLVYASNAGPGTLDPHMGNSLVELEIAHQIYEGLVTIDANYNTATMLAESYVLSEDGKTLTFKLRKGVKFHDGSDMKSDDVLASFERYAKVSPNAKVLDIVDHYETPDDYTFVIHLKEVNAAFLDTLKSPVYPFSINPAEQKDKPARELDIIGTGPFKLGEWKRDSHLYLEKFADYVADKGKPASGYAGEKKVYVDKVRVNFLSETNSRVAAIQTGEAQVTTQLTADATKKLQNAPGVKPLEIIPFCQQYLIVNTQQAPTNNSAIRKALRTAVNAEDILVVSGEAATMDPSMSYPGGAYYSKENAEPYYNQNNPDEAAKMLADAGYKGEELVLLTNSNYDYMRDNIVLLAEQLQAAGFKARVEMTDWATNSTAMQTGSGKWNVSTTSFCSNPLLGPQQWQSVVYLFPQVKSDALMDTAYKKFFTSLKLEDRRAAWLDIEKHILDEAYMIKISNRASGRAYRPDDIGGYPEYYMNFFWNVWLKKQ</sequence>
<proteinExistence type="inferred from homology"/>
<gene>
    <name type="ordered locus">BruAb2_1030</name>
</gene>
<protein>
    <recommendedName>
        <fullName>Putative peptide-binding periplasmic protein BruAb2_1030</fullName>
    </recommendedName>
</protein>
<keyword id="KW-0574">Periplasm</keyword>
<keyword id="KW-0732">Signal</keyword>
<keyword id="KW-0813">Transport</keyword>
<accession>Q8VQK3</accession>
<evidence type="ECO:0000250" key="1"/>
<evidence type="ECO:0000255" key="2"/>
<evidence type="ECO:0000305" key="3"/>
<organism>
    <name type="scientific">Brucella abortus biovar 1 (strain 9-941)</name>
    <dbReference type="NCBI Taxonomy" id="262698"/>
    <lineage>
        <taxon>Bacteria</taxon>
        <taxon>Pseudomonadati</taxon>
        <taxon>Pseudomonadota</taxon>
        <taxon>Alphaproteobacteria</taxon>
        <taxon>Hyphomicrobiales</taxon>
        <taxon>Brucellaceae</taxon>
        <taxon>Brucella/Ochrobactrum group</taxon>
        <taxon>Brucella</taxon>
    </lineage>
</organism>
<name>Y1030_BRUAB</name>
<reference key="1">
    <citation type="submission" date="2001-12" db="EMBL/GenBank/DDBJ databases">
        <title>Tn1953, a new element from Brucella abortus.</title>
        <authorList>
            <person name="Bricker B.J."/>
        </authorList>
    </citation>
    <scope>NUCLEOTIDE SEQUENCE [GENOMIC DNA]</scope>
    <source>
        <strain>544 / Biovar 1</strain>
    </source>
</reference>
<reference key="2">
    <citation type="journal article" date="2005" name="J. Bacteriol.">
        <title>Completion of the genome sequence of Brucella abortus and comparison to the highly similar genomes of Brucella melitensis and Brucella suis.</title>
        <authorList>
            <person name="Halling S.M."/>
            <person name="Peterson-Burch B.D."/>
            <person name="Bricker B.J."/>
            <person name="Zuerner R.L."/>
            <person name="Qing Z."/>
            <person name="Li L.-L."/>
            <person name="Kapur V."/>
            <person name="Alt D.P."/>
            <person name="Olsen S.C."/>
        </authorList>
    </citation>
    <scope>NUCLEOTIDE SEQUENCE [LARGE SCALE GENOMIC DNA]</scope>
    <source>
        <strain>9-941</strain>
    </source>
</reference>